<evidence type="ECO:0000250" key="1"/>
<evidence type="ECO:0000305" key="2"/>
<proteinExistence type="evidence at transcript level"/>
<accession>Q10BT5</accession>
<accession>B7E5E8</accession>
<accession>Q75HI9</accession>
<accession>Q9XF94</accession>
<name>PP2A2_ORYSJ</name>
<protein>
    <recommendedName>
        <fullName>Serine/threonine-protein phosphatase PP2A-2 catalytic subunit</fullName>
        <ecNumber>3.1.3.16</ecNumber>
    </recommendedName>
</protein>
<comment type="catalytic activity">
    <reaction>
        <text>O-phospho-L-seryl-[protein] + H2O = L-seryl-[protein] + phosphate</text>
        <dbReference type="Rhea" id="RHEA:20629"/>
        <dbReference type="Rhea" id="RHEA-COMP:9863"/>
        <dbReference type="Rhea" id="RHEA-COMP:11604"/>
        <dbReference type="ChEBI" id="CHEBI:15377"/>
        <dbReference type="ChEBI" id="CHEBI:29999"/>
        <dbReference type="ChEBI" id="CHEBI:43474"/>
        <dbReference type="ChEBI" id="CHEBI:83421"/>
        <dbReference type="EC" id="3.1.3.16"/>
    </reaction>
</comment>
<comment type="catalytic activity">
    <reaction>
        <text>O-phospho-L-threonyl-[protein] + H2O = L-threonyl-[protein] + phosphate</text>
        <dbReference type="Rhea" id="RHEA:47004"/>
        <dbReference type="Rhea" id="RHEA-COMP:11060"/>
        <dbReference type="Rhea" id="RHEA-COMP:11605"/>
        <dbReference type="ChEBI" id="CHEBI:15377"/>
        <dbReference type="ChEBI" id="CHEBI:30013"/>
        <dbReference type="ChEBI" id="CHEBI:43474"/>
        <dbReference type="ChEBI" id="CHEBI:61977"/>
        <dbReference type="EC" id="3.1.3.16"/>
    </reaction>
</comment>
<comment type="cofactor">
    <cofactor evidence="1">
        <name>Mn(2+)</name>
        <dbReference type="ChEBI" id="CHEBI:29035"/>
    </cofactor>
    <text evidence="1">Binds 2 manganese ions per subunit.</text>
</comment>
<comment type="subcellular location">
    <subcellularLocation>
        <location evidence="1">Cytoplasm</location>
    </subcellularLocation>
</comment>
<comment type="similarity">
    <text evidence="2">Belongs to the PPP phosphatase family. PP-2A subfamily.</text>
</comment>
<feature type="chain" id="PRO_0000058862" description="Serine/threonine-protein phosphatase PP2A-2 catalytic subunit">
    <location>
        <begin position="1"/>
        <end position="307"/>
    </location>
</feature>
<feature type="active site" description="Proton donor" evidence="1">
    <location>
        <position position="116"/>
    </location>
</feature>
<feature type="binding site" evidence="1">
    <location>
        <position position="55"/>
    </location>
    <ligand>
        <name>Mn(2+)</name>
        <dbReference type="ChEBI" id="CHEBI:29035"/>
        <label>1</label>
    </ligand>
</feature>
<feature type="binding site" evidence="1">
    <location>
        <position position="57"/>
    </location>
    <ligand>
        <name>Mn(2+)</name>
        <dbReference type="ChEBI" id="CHEBI:29035"/>
        <label>1</label>
    </ligand>
</feature>
<feature type="binding site" evidence="1">
    <location>
        <position position="83"/>
    </location>
    <ligand>
        <name>Mn(2+)</name>
        <dbReference type="ChEBI" id="CHEBI:29035"/>
        <label>1</label>
    </ligand>
</feature>
<feature type="binding site" evidence="1">
    <location>
        <position position="83"/>
    </location>
    <ligand>
        <name>Mn(2+)</name>
        <dbReference type="ChEBI" id="CHEBI:29035"/>
        <label>2</label>
    </ligand>
</feature>
<feature type="binding site" evidence="1">
    <location>
        <position position="115"/>
    </location>
    <ligand>
        <name>Mn(2+)</name>
        <dbReference type="ChEBI" id="CHEBI:29035"/>
        <label>2</label>
    </ligand>
</feature>
<feature type="binding site" evidence="1">
    <location>
        <position position="165"/>
    </location>
    <ligand>
        <name>Mn(2+)</name>
        <dbReference type="ChEBI" id="CHEBI:29035"/>
        <label>2</label>
    </ligand>
</feature>
<feature type="binding site" evidence="1">
    <location>
        <position position="239"/>
    </location>
    <ligand>
        <name>Mn(2+)</name>
        <dbReference type="ChEBI" id="CHEBI:29035"/>
        <label>2</label>
    </ligand>
</feature>
<dbReference type="EC" id="3.1.3.16"/>
<dbReference type="EMBL" id="AC135563">
    <property type="protein sequence ID" value="AAS07220.1"/>
    <property type="molecule type" value="Genomic_DNA"/>
</dbReference>
<dbReference type="EMBL" id="DP000009">
    <property type="protein sequence ID" value="ABF99431.1"/>
    <property type="molecule type" value="Genomic_DNA"/>
</dbReference>
<dbReference type="EMBL" id="DP000009">
    <property type="protein sequence ID" value="ABF99432.1"/>
    <property type="molecule type" value="Genomic_DNA"/>
</dbReference>
<dbReference type="EMBL" id="AP008209">
    <property type="protein sequence ID" value="BAF13541.1"/>
    <property type="molecule type" value="Genomic_DNA"/>
</dbReference>
<dbReference type="EMBL" id="AP014959">
    <property type="protein sequence ID" value="BAS86935.1"/>
    <property type="molecule type" value="Genomic_DNA"/>
</dbReference>
<dbReference type="EMBL" id="CM000140">
    <property type="protein sequence ID" value="EAZ28974.1"/>
    <property type="molecule type" value="Genomic_DNA"/>
</dbReference>
<dbReference type="EMBL" id="AK060885">
    <property type="protein sequence ID" value="BAG87595.1"/>
    <property type="molecule type" value="mRNA"/>
</dbReference>
<dbReference type="EMBL" id="AK099257">
    <property type="protein sequence ID" value="BAG94025.1"/>
    <property type="molecule type" value="mRNA"/>
</dbReference>
<dbReference type="EMBL" id="AK100350">
    <property type="protein sequence ID" value="BAG94563.1"/>
    <property type="molecule type" value="mRNA"/>
</dbReference>
<dbReference type="RefSeq" id="XP_015631518.1">
    <property type="nucleotide sequence ID" value="XM_015776032.1"/>
</dbReference>
<dbReference type="RefSeq" id="XP_015631519.1">
    <property type="nucleotide sequence ID" value="XM_015776033.1"/>
</dbReference>
<dbReference type="SMR" id="Q10BT5"/>
<dbReference type="FunCoup" id="Q10BT5">
    <property type="interactions" value="1638"/>
</dbReference>
<dbReference type="STRING" id="39947.Q10BT5"/>
<dbReference type="PaxDb" id="39947-Q10BT5"/>
<dbReference type="EnsemblPlants" id="Os03t0805300-01">
    <property type="protein sequence ID" value="Os03t0805300-01"/>
    <property type="gene ID" value="Os03g0805300"/>
</dbReference>
<dbReference type="Gramene" id="Os03t0805300-01">
    <property type="protein sequence ID" value="Os03t0805300-01"/>
    <property type="gene ID" value="Os03g0805300"/>
</dbReference>
<dbReference type="KEGG" id="dosa:Os03g0805300"/>
<dbReference type="eggNOG" id="KOG0371">
    <property type="taxonomic scope" value="Eukaryota"/>
</dbReference>
<dbReference type="HOGENOM" id="CLU_004962_8_1_1"/>
<dbReference type="InParanoid" id="Q10BT5"/>
<dbReference type="OMA" id="EGYNWGQ"/>
<dbReference type="OrthoDB" id="1930084at2759"/>
<dbReference type="PlantReactome" id="R-OSA-5632095">
    <property type="pathway name" value="Brassinosteroid signaling"/>
</dbReference>
<dbReference type="Proteomes" id="UP000000763">
    <property type="component" value="Chromosome 3"/>
</dbReference>
<dbReference type="Proteomes" id="UP000007752">
    <property type="component" value="Chromosome 3"/>
</dbReference>
<dbReference type="Proteomes" id="UP000059680">
    <property type="component" value="Chromosome 3"/>
</dbReference>
<dbReference type="GO" id="GO:0005829">
    <property type="term" value="C:cytosol"/>
    <property type="evidence" value="ECO:0000318"/>
    <property type="project" value="GO_Central"/>
</dbReference>
<dbReference type="GO" id="GO:0005634">
    <property type="term" value="C:nucleus"/>
    <property type="evidence" value="ECO:0000318"/>
    <property type="project" value="GO_Central"/>
</dbReference>
<dbReference type="GO" id="GO:0046872">
    <property type="term" value="F:metal ion binding"/>
    <property type="evidence" value="ECO:0007669"/>
    <property type="project" value="UniProtKB-KW"/>
</dbReference>
<dbReference type="GO" id="GO:0004722">
    <property type="term" value="F:protein serine/threonine phosphatase activity"/>
    <property type="evidence" value="ECO:0000318"/>
    <property type="project" value="GO_Central"/>
</dbReference>
<dbReference type="GO" id="GO:0000278">
    <property type="term" value="P:mitotic cell cycle"/>
    <property type="evidence" value="ECO:0000318"/>
    <property type="project" value="GO_Central"/>
</dbReference>
<dbReference type="CDD" id="cd07415">
    <property type="entry name" value="MPP_PP2A_PP4_PP6"/>
    <property type="match status" value="1"/>
</dbReference>
<dbReference type="FunFam" id="3.60.21.10:FF:000003">
    <property type="entry name" value="Serine/threonine-protein phosphatase"/>
    <property type="match status" value="1"/>
</dbReference>
<dbReference type="Gene3D" id="3.60.21.10">
    <property type="match status" value="1"/>
</dbReference>
<dbReference type="InterPro" id="IPR004843">
    <property type="entry name" value="Calcineurin-like_PHP_ApaH"/>
</dbReference>
<dbReference type="InterPro" id="IPR029052">
    <property type="entry name" value="Metallo-depent_PP-like"/>
</dbReference>
<dbReference type="InterPro" id="IPR047129">
    <property type="entry name" value="PPA2-like"/>
</dbReference>
<dbReference type="InterPro" id="IPR006186">
    <property type="entry name" value="Ser/Thr-sp_prot-phosphatase"/>
</dbReference>
<dbReference type="PANTHER" id="PTHR45619">
    <property type="entry name" value="SERINE/THREONINE-PROTEIN PHOSPHATASE PP2A-RELATED"/>
    <property type="match status" value="1"/>
</dbReference>
<dbReference type="Pfam" id="PF00149">
    <property type="entry name" value="Metallophos"/>
    <property type="match status" value="1"/>
</dbReference>
<dbReference type="PRINTS" id="PR00114">
    <property type="entry name" value="STPHPHTASE"/>
</dbReference>
<dbReference type="SMART" id="SM00156">
    <property type="entry name" value="PP2Ac"/>
    <property type="match status" value="1"/>
</dbReference>
<dbReference type="SUPFAM" id="SSF56300">
    <property type="entry name" value="Metallo-dependent phosphatases"/>
    <property type="match status" value="1"/>
</dbReference>
<dbReference type="PROSITE" id="PS00125">
    <property type="entry name" value="SER_THR_PHOSPHATASE"/>
    <property type="match status" value="1"/>
</dbReference>
<sequence>MSSPHGGLDDQIERLMQCKPLPEPEVRALCEKAKEILMEESNVQPVKSPVTICGDIHGQFHDLAELFRIGGKCPDTNYLFMGDYVDRGYYSVETVTLLVALKVRYPQRITILRGNHESRQITQVYGFYDECLRKYGNANVWKTFTDLFDYFPLTALVESEIFCLHGGLSPSIETLDNIRNFDRVQEVPHEGPMCDLLWSDPDDRCGWGISPRGAGYTFGQDISEQFNHTNNLRLIARAHQLVMEGFNWAHEQKVVTIFSAPNYCYRCGNMASILEVDDCREHTFIQFEPAPRRGEPDVTRRTPDYFL</sequence>
<organism>
    <name type="scientific">Oryza sativa subsp. japonica</name>
    <name type="common">Rice</name>
    <dbReference type="NCBI Taxonomy" id="39947"/>
    <lineage>
        <taxon>Eukaryota</taxon>
        <taxon>Viridiplantae</taxon>
        <taxon>Streptophyta</taxon>
        <taxon>Embryophyta</taxon>
        <taxon>Tracheophyta</taxon>
        <taxon>Spermatophyta</taxon>
        <taxon>Magnoliopsida</taxon>
        <taxon>Liliopsida</taxon>
        <taxon>Poales</taxon>
        <taxon>Poaceae</taxon>
        <taxon>BOP clade</taxon>
        <taxon>Oryzoideae</taxon>
        <taxon>Oryzeae</taxon>
        <taxon>Oryzinae</taxon>
        <taxon>Oryza</taxon>
        <taxon>Oryza sativa</taxon>
    </lineage>
</organism>
<keyword id="KW-0963">Cytoplasm</keyword>
<keyword id="KW-0378">Hydrolase</keyword>
<keyword id="KW-0464">Manganese</keyword>
<keyword id="KW-0479">Metal-binding</keyword>
<keyword id="KW-0904">Protein phosphatase</keyword>
<keyword id="KW-1185">Reference proteome</keyword>
<reference key="1">
    <citation type="journal article" date="2005" name="Genome Res.">
        <title>Sequence, annotation, and analysis of synteny between rice chromosome 3 and diverged grass species.</title>
        <authorList>
            <consortium name="The rice chromosome 3 sequencing consortium"/>
            <person name="Buell C.R."/>
            <person name="Yuan Q."/>
            <person name="Ouyang S."/>
            <person name="Liu J."/>
            <person name="Zhu W."/>
            <person name="Wang A."/>
            <person name="Maiti R."/>
            <person name="Haas B."/>
            <person name="Wortman J."/>
            <person name="Pertea M."/>
            <person name="Jones K.M."/>
            <person name="Kim M."/>
            <person name="Overton L."/>
            <person name="Tsitrin T."/>
            <person name="Fadrosh D."/>
            <person name="Bera J."/>
            <person name="Weaver B."/>
            <person name="Jin S."/>
            <person name="Johri S."/>
            <person name="Reardon M."/>
            <person name="Webb K."/>
            <person name="Hill J."/>
            <person name="Moffat K."/>
            <person name="Tallon L."/>
            <person name="Van Aken S."/>
            <person name="Lewis M."/>
            <person name="Utterback T."/>
            <person name="Feldblyum T."/>
            <person name="Zismann V."/>
            <person name="Iobst S."/>
            <person name="Hsiao J."/>
            <person name="de Vazeille A.R."/>
            <person name="Salzberg S.L."/>
            <person name="White O."/>
            <person name="Fraser C.M."/>
            <person name="Yu Y."/>
            <person name="Kim H."/>
            <person name="Rambo T."/>
            <person name="Currie J."/>
            <person name="Collura K."/>
            <person name="Kernodle-Thompson S."/>
            <person name="Wei F."/>
            <person name="Kudrna K."/>
            <person name="Ammiraju J.S.S."/>
            <person name="Luo M."/>
            <person name="Goicoechea J.L."/>
            <person name="Wing R.A."/>
            <person name="Henry D."/>
            <person name="Oates R."/>
            <person name="Palmer M."/>
            <person name="Pries G."/>
            <person name="Saski C."/>
            <person name="Simmons J."/>
            <person name="Soderlund C."/>
            <person name="Nelson W."/>
            <person name="de la Bastide M."/>
            <person name="Spiegel L."/>
            <person name="Nascimento L."/>
            <person name="Huang E."/>
            <person name="Preston R."/>
            <person name="Zutavern T."/>
            <person name="Palmer L."/>
            <person name="O'Shaughnessy A."/>
            <person name="Dike S."/>
            <person name="McCombie W.R."/>
            <person name="Minx P."/>
            <person name="Cordum H."/>
            <person name="Wilson R."/>
            <person name="Jin W."/>
            <person name="Lee H.R."/>
            <person name="Jiang J."/>
            <person name="Jackson S."/>
        </authorList>
    </citation>
    <scope>NUCLEOTIDE SEQUENCE [LARGE SCALE GENOMIC DNA]</scope>
    <source>
        <strain>cv. Nipponbare</strain>
    </source>
</reference>
<reference key="2">
    <citation type="journal article" date="2005" name="Nature">
        <title>The map-based sequence of the rice genome.</title>
        <authorList>
            <consortium name="International rice genome sequencing project (IRGSP)"/>
        </authorList>
    </citation>
    <scope>NUCLEOTIDE SEQUENCE [LARGE SCALE GENOMIC DNA]</scope>
    <source>
        <strain>cv. Nipponbare</strain>
    </source>
</reference>
<reference key="3">
    <citation type="journal article" date="2008" name="Nucleic Acids Res.">
        <title>The rice annotation project database (RAP-DB): 2008 update.</title>
        <authorList>
            <consortium name="The rice annotation project (RAP)"/>
        </authorList>
    </citation>
    <scope>GENOME REANNOTATION</scope>
    <source>
        <strain>cv. Nipponbare</strain>
    </source>
</reference>
<reference key="4">
    <citation type="journal article" date="2013" name="Rice">
        <title>Improvement of the Oryza sativa Nipponbare reference genome using next generation sequence and optical map data.</title>
        <authorList>
            <person name="Kawahara Y."/>
            <person name="de la Bastide M."/>
            <person name="Hamilton J.P."/>
            <person name="Kanamori H."/>
            <person name="McCombie W.R."/>
            <person name="Ouyang S."/>
            <person name="Schwartz D.C."/>
            <person name="Tanaka T."/>
            <person name="Wu J."/>
            <person name="Zhou S."/>
            <person name="Childs K.L."/>
            <person name="Davidson R.M."/>
            <person name="Lin H."/>
            <person name="Quesada-Ocampo L."/>
            <person name="Vaillancourt B."/>
            <person name="Sakai H."/>
            <person name="Lee S.S."/>
            <person name="Kim J."/>
            <person name="Numa H."/>
            <person name="Itoh T."/>
            <person name="Buell C.R."/>
            <person name="Matsumoto T."/>
        </authorList>
    </citation>
    <scope>GENOME REANNOTATION</scope>
    <source>
        <strain>cv. Nipponbare</strain>
    </source>
</reference>
<reference key="5">
    <citation type="journal article" date="2005" name="PLoS Biol.">
        <title>The genomes of Oryza sativa: a history of duplications.</title>
        <authorList>
            <person name="Yu J."/>
            <person name="Wang J."/>
            <person name="Lin W."/>
            <person name="Li S."/>
            <person name="Li H."/>
            <person name="Zhou J."/>
            <person name="Ni P."/>
            <person name="Dong W."/>
            <person name="Hu S."/>
            <person name="Zeng C."/>
            <person name="Zhang J."/>
            <person name="Zhang Y."/>
            <person name="Li R."/>
            <person name="Xu Z."/>
            <person name="Li S."/>
            <person name="Li X."/>
            <person name="Zheng H."/>
            <person name="Cong L."/>
            <person name="Lin L."/>
            <person name="Yin J."/>
            <person name="Geng J."/>
            <person name="Li G."/>
            <person name="Shi J."/>
            <person name="Liu J."/>
            <person name="Lv H."/>
            <person name="Li J."/>
            <person name="Wang J."/>
            <person name="Deng Y."/>
            <person name="Ran L."/>
            <person name="Shi X."/>
            <person name="Wang X."/>
            <person name="Wu Q."/>
            <person name="Li C."/>
            <person name="Ren X."/>
            <person name="Wang J."/>
            <person name="Wang X."/>
            <person name="Li D."/>
            <person name="Liu D."/>
            <person name="Zhang X."/>
            <person name="Ji Z."/>
            <person name="Zhao W."/>
            <person name="Sun Y."/>
            <person name="Zhang Z."/>
            <person name="Bao J."/>
            <person name="Han Y."/>
            <person name="Dong L."/>
            <person name="Ji J."/>
            <person name="Chen P."/>
            <person name="Wu S."/>
            <person name="Liu J."/>
            <person name="Xiao Y."/>
            <person name="Bu D."/>
            <person name="Tan J."/>
            <person name="Yang L."/>
            <person name="Ye C."/>
            <person name="Zhang J."/>
            <person name="Xu J."/>
            <person name="Zhou Y."/>
            <person name="Yu Y."/>
            <person name="Zhang B."/>
            <person name="Zhuang S."/>
            <person name="Wei H."/>
            <person name="Liu B."/>
            <person name="Lei M."/>
            <person name="Yu H."/>
            <person name="Li Y."/>
            <person name="Xu H."/>
            <person name="Wei S."/>
            <person name="He X."/>
            <person name="Fang L."/>
            <person name="Zhang Z."/>
            <person name="Zhang Y."/>
            <person name="Huang X."/>
            <person name="Su Z."/>
            <person name="Tong W."/>
            <person name="Li J."/>
            <person name="Tong Z."/>
            <person name="Li S."/>
            <person name="Ye J."/>
            <person name="Wang L."/>
            <person name="Fang L."/>
            <person name="Lei T."/>
            <person name="Chen C.-S."/>
            <person name="Chen H.-C."/>
            <person name="Xu Z."/>
            <person name="Li H."/>
            <person name="Huang H."/>
            <person name="Zhang F."/>
            <person name="Xu H."/>
            <person name="Li N."/>
            <person name="Zhao C."/>
            <person name="Li S."/>
            <person name="Dong L."/>
            <person name="Huang Y."/>
            <person name="Li L."/>
            <person name="Xi Y."/>
            <person name="Qi Q."/>
            <person name="Li W."/>
            <person name="Zhang B."/>
            <person name="Hu W."/>
            <person name="Zhang Y."/>
            <person name="Tian X."/>
            <person name="Jiao Y."/>
            <person name="Liang X."/>
            <person name="Jin J."/>
            <person name="Gao L."/>
            <person name="Zheng W."/>
            <person name="Hao B."/>
            <person name="Liu S.-M."/>
            <person name="Wang W."/>
            <person name="Yuan L."/>
            <person name="Cao M."/>
            <person name="McDermott J."/>
            <person name="Samudrala R."/>
            <person name="Wang J."/>
            <person name="Wong G.K.-S."/>
            <person name="Yang H."/>
        </authorList>
    </citation>
    <scope>NUCLEOTIDE SEQUENCE [LARGE SCALE GENOMIC DNA]</scope>
    <source>
        <strain>cv. Nipponbare</strain>
    </source>
</reference>
<reference key="6">
    <citation type="journal article" date="2003" name="Science">
        <title>Collection, mapping, and annotation of over 28,000 cDNA clones from japonica rice.</title>
        <authorList>
            <consortium name="The rice full-length cDNA consortium"/>
        </authorList>
    </citation>
    <scope>NUCLEOTIDE SEQUENCE [LARGE SCALE MRNA]</scope>
    <source>
        <strain>cv. Nipponbare</strain>
    </source>
</reference>
<gene>
    <name type="primary">PP2A2</name>
    <name type="ordered locus">Os03g0805300</name>
    <name type="ordered locus">LOC_Os03g59060</name>
    <name type="ORF">OsJ_012457</name>
    <name type="ORF">OSJNBb0015I02.15</name>
</gene>